<proteinExistence type="inferred from homology"/>
<organism>
    <name type="scientific">Stevia rebaudiana</name>
    <name type="common">Stevia</name>
    <name type="synonym">Eupatorium rebaudianum</name>
    <dbReference type="NCBI Taxonomy" id="55670"/>
    <lineage>
        <taxon>Eukaryota</taxon>
        <taxon>Viridiplantae</taxon>
        <taxon>Streptophyta</taxon>
        <taxon>Embryophyta</taxon>
        <taxon>Tracheophyta</taxon>
        <taxon>Spermatophyta</taxon>
        <taxon>Magnoliopsida</taxon>
        <taxon>eudicotyledons</taxon>
        <taxon>Gunneridae</taxon>
        <taxon>Pentapetalae</taxon>
        <taxon>asterids</taxon>
        <taxon>campanulids</taxon>
        <taxon>Asterales</taxon>
        <taxon>Asteraceae</taxon>
        <taxon>Asteroideae</taxon>
        <taxon>Heliantheae alliance</taxon>
        <taxon>Eupatorieae</taxon>
        <taxon>Stevia</taxon>
    </lineage>
</organism>
<keyword id="KW-0004">4Fe-4S</keyword>
<keyword id="KW-0150">Chloroplast</keyword>
<keyword id="KW-0408">Iron</keyword>
<keyword id="KW-0411">Iron-sulfur</keyword>
<keyword id="KW-0472">Membrane</keyword>
<keyword id="KW-0479">Metal-binding</keyword>
<keyword id="KW-0520">NAD</keyword>
<keyword id="KW-0521">NADP</keyword>
<keyword id="KW-0934">Plastid</keyword>
<keyword id="KW-0618">Plastoquinone</keyword>
<keyword id="KW-0874">Quinone</keyword>
<keyword id="KW-0677">Repeat</keyword>
<keyword id="KW-0793">Thylakoid</keyword>
<keyword id="KW-1278">Translocase</keyword>
<reference key="1">
    <citation type="submission" date="2003-01" db="EMBL/GenBank/DDBJ databases">
        <title>Chloroplast DNA phylogeny of tribe Heliantheae (Asteraceae).</title>
        <authorList>
            <person name="Panero J.L."/>
            <person name="Baldwin B.G."/>
            <person name="Schilling E.E."/>
            <person name="Clevinger J.A."/>
        </authorList>
    </citation>
    <scope>NUCLEOTIDE SEQUENCE [LARGE SCALE GENOMIC DNA]</scope>
</reference>
<feature type="chain" id="PRO_0000245677" description="NAD(P)H-quinone oxidoreductase subunit I, chloroplastic">
    <location>
        <begin position="1"/>
        <end position="166"/>
    </location>
</feature>
<feature type="domain" description="4Fe-4S ferredoxin-type 1" evidence="1">
    <location>
        <begin position="55"/>
        <end position="84"/>
    </location>
</feature>
<feature type="domain" description="4Fe-4S ferredoxin-type 2" evidence="1">
    <location>
        <begin position="95"/>
        <end position="124"/>
    </location>
</feature>
<feature type="binding site" evidence="1">
    <location>
        <position position="64"/>
    </location>
    <ligand>
        <name>[4Fe-4S] cluster</name>
        <dbReference type="ChEBI" id="CHEBI:49883"/>
        <label>1</label>
    </ligand>
</feature>
<feature type="binding site" evidence="1">
    <location>
        <position position="67"/>
    </location>
    <ligand>
        <name>[4Fe-4S] cluster</name>
        <dbReference type="ChEBI" id="CHEBI:49883"/>
        <label>1</label>
    </ligand>
</feature>
<feature type="binding site" evidence="1">
    <location>
        <position position="70"/>
    </location>
    <ligand>
        <name>[4Fe-4S] cluster</name>
        <dbReference type="ChEBI" id="CHEBI:49883"/>
        <label>1</label>
    </ligand>
</feature>
<feature type="binding site" evidence="1">
    <location>
        <position position="74"/>
    </location>
    <ligand>
        <name>[4Fe-4S] cluster</name>
        <dbReference type="ChEBI" id="CHEBI:49883"/>
        <label>2</label>
    </ligand>
</feature>
<feature type="binding site" evidence="1">
    <location>
        <position position="104"/>
    </location>
    <ligand>
        <name>[4Fe-4S] cluster</name>
        <dbReference type="ChEBI" id="CHEBI:49883"/>
        <label>2</label>
    </ligand>
</feature>
<feature type="binding site" evidence="1">
    <location>
        <position position="107"/>
    </location>
    <ligand>
        <name>[4Fe-4S] cluster</name>
        <dbReference type="ChEBI" id="CHEBI:49883"/>
        <label>2</label>
    </ligand>
</feature>
<feature type="binding site" evidence="1">
    <location>
        <position position="110"/>
    </location>
    <ligand>
        <name>[4Fe-4S] cluster</name>
        <dbReference type="ChEBI" id="CHEBI:49883"/>
        <label>2</label>
    </ligand>
</feature>
<feature type="binding site" evidence="1">
    <location>
        <position position="114"/>
    </location>
    <ligand>
        <name>[4Fe-4S] cluster</name>
        <dbReference type="ChEBI" id="CHEBI:49883"/>
        <label>1</label>
    </ligand>
</feature>
<geneLocation type="chloroplast"/>
<evidence type="ECO:0000255" key="1">
    <source>
        <dbReference type="HAMAP-Rule" id="MF_01351"/>
    </source>
</evidence>
<gene>
    <name evidence="1" type="primary">ndhI</name>
</gene>
<protein>
    <recommendedName>
        <fullName evidence="1">NAD(P)H-quinone oxidoreductase subunit I, chloroplastic</fullName>
        <ecNumber evidence="1">7.1.1.-</ecNumber>
    </recommendedName>
    <alternativeName>
        <fullName evidence="1">NAD(P)H dehydrogenase subunit I</fullName>
        <shortName evidence="1">NDH subunit I</shortName>
    </alternativeName>
    <alternativeName>
        <fullName evidence="1">NADH-plastoquinone oxidoreductase subunit I</fullName>
    </alternativeName>
</protein>
<dbReference type="EC" id="7.1.1.-" evidence="1"/>
<dbReference type="EMBL" id="AF383856">
    <property type="protein sequence ID" value="AAN61797.1"/>
    <property type="molecule type" value="Genomic_DNA"/>
</dbReference>
<dbReference type="RefSeq" id="YP_010470277.1">
    <property type="nucleotide sequence ID" value="NC_066036.1"/>
</dbReference>
<dbReference type="SMR" id="Q8HVK7"/>
<dbReference type="GeneID" id="74846691"/>
<dbReference type="GO" id="GO:0009535">
    <property type="term" value="C:chloroplast thylakoid membrane"/>
    <property type="evidence" value="ECO:0007669"/>
    <property type="project" value="UniProtKB-SubCell"/>
</dbReference>
<dbReference type="GO" id="GO:0051539">
    <property type="term" value="F:4 iron, 4 sulfur cluster binding"/>
    <property type="evidence" value="ECO:0007669"/>
    <property type="project" value="UniProtKB-KW"/>
</dbReference>
<dbReference type="GO" id="GO:0005506">
    <property type="term" value="F:iron ion binding"/>
    <property type="evidence" value="ECO:0007669"/>
    <property type="project" value="UniProtKB-UniRule"/>
</dbReference>
<dbReference type="GO" id="GO:0008137">
    <property type="term" value="F:NADH dehydrogenase (ubiquinone) activity"/>
    <property type="evidence" value="ECO:0007669"/>
    <property type="project" value="InterPro"/>
</dbReference>
<dbReference type="GO" id="GO:0048038">
    <property type="term" value="F:quinone binding"/>
    <property type="evidence" value="ECO:0007669"/>
    <property type="project" value="UniProtKB-KW"/>
</dbReference>
<dbReference type="GO" id="GO:0019684">
    <property type="term" value="P:photosynthesis, light reaction"/>
    <property type="evidence" value="ECO:0007669"/>
    <property type="project" value="UniProtKB-UniRule"/>
</dbReference>
<dbReference type="FunFam" id="3.30.70.3270:FF:000006">
    <property type="entry name" value="NAD(P)H-quinone oxidoreductase subunit I, chloroplastic"/>
    <property type="match status" value="1"/>
</dbReference>
<dbReference type="Gene3D" id="3.30.70.3270">
    <property type="match status" value="1"/>
</dbReference>
<dbReference type="HAMAP" id="MF_01351">
    <property type="entry name" value="NDH1_NuoI"/>
    <property type="match status" value="1"/>
</dbReference>
<dbReference type="InterPro" id="IPR017896">
    <property type="entry name" value="4Fe4S_Fe-S-bd"/>
</dbReference>
<dbReference type="InterPro" id="IPR017900">
    <property type="entry name" value="4Fe4S_Fe_S_CS"/>
</dbReference>
<dbReference type="InterPro" id="IPR010226">
    <property type="entry name" value="NADH_quinone_OxRdtase_chainI"/>
</dbReference>
<dbReference type="InterPro" id="IPR004497">
    <property type="entry name" value="NDHI"/>
</dbReference>
<dbReference type="NCBIfam" id="TIGR00403">
    <property type="entry name" value="ndhI"/>
    <property type="match status" value="1"/>
</dbReference>
<dbReference type="NCBIfam" id="TIGR01971">
    <property type="entry name" value="NuoI"/>
    <property type="match status" value="1"/>
</dbReference>
<dbReference type="NCBIfam" id="NF004537">
    <property type="entry name" value="PRK05888.1-3"/>
    <property type="match status" value="1"/>
</dbReference>
<dbReference type="PANTHER" id="PTHR47275">
    <property type="entry name" value="NAD(P)H-QUINONE OXIDOREDUCTASE SUBUNIT I, CHLOROPLASTIC"/>
    <property type="match status" value="1"/>
</dbReference>
<dbReference type="PANTHER" id="PTHR47275:SF1">
    <property type="entry name" value="NAD(P)H-QUINONE OXIDOREDUCTASE SUBUNIT I, CHLOROPLASTIC"/>
    <property type="match status" value="1"/>
</dbReference>
<dbReference type="Pfam" id="PF00037">
    <property type="entry name" value="Fer4"/>
    <property type="match status" value="2"/>
</dbReference>
<dbReference type="SUPFAM" id="SSF54862">
    <property type="entry name" value="4Fe-4S ferredoxins"/>
    <property type="match status" value="1"/>
</dbReference>
<dbReference type="PROSITE" id="PS00198">
    <property type="entry name" value="4FE4S_FER_1"/>
    <property type="match status" value="2"/>
</dbReference>
<dbReference type="PROSITE" id="PS51379">
    <property type="entry name" value="4FE4S_FER_2"/>
    <property type="match status" value="2"/>
</dbReference>
<sequence>MFPMVTEFMNYGQQTVRAARYIGQGFIITLSHANRLPVTIQYPYEKLITSERFRGRIHFEFDKCIACEVCVRVCPIDLPVVDWKLETDIRKKRLLNYSIDFGICIFCGNCVEYCPTNCLSMTEEYELSTYDRHELNYNQIALGRLPMSIIDDYTIRTILNLPEIKT</sequence>
<accession>Q8HVK7</accession>
<name>NDHI_STERE</name>
<comment type="function">
    <text evidence="1">NDH shuttles electrons from NAD(P)H:plastoquinone, via FMN and iron-sulfur (Fe-S) centers, to quinones in the photosynthetic chain and possibly in a chloroplast respiratory chain. The immediate electron acceptor for the enzyme in this species is believed to be plastoquinone. Couples the redox reaction to proton translocation, and thus conserves the redox energy in a proton gradient.</text>
</comment>
<comment type="catalytic activity">
    <reaction evidence="1">
        <text>a plastoquinone + NADH + (n+1) H(+)(in) = a plastoquinol + NAD(+) + n H(+)(out)</text>
        <dbReference type="Rhea" id="RHEA:42608"/>
        <dbReference type="Rhea" id="RHEA-COMP:9561"/>
        <dbReference type="Rhea" id="RHEA-COMP:9562"/>
        <dbReference type="ChEBI" id="CHEBI:15378"/>
        <dbReference type="ChEBI" id="CHEBI:17757"/>
        <dbReference type="ChEBI" id="CHEBI:57540"/>
        <dbReference type="ChEBI" id="CHEBI:57945"/>
        <dbReference type="ChEBI" id="CHEBI:62192"/>
    </reaction>
</comment>
<comment type="catalytic activity">
    <reaction evidence="1">
        <text>a plastoquinone + NADPH + (n+1) H(+)(in) = a plastoquinol + NADP(+) + n H(+)(out)</text>
        <dbReference type="Rhea" id="RHEA:42612"/>
        <dbReference type="Rhea" id="RHEA-COMP:9561"/>
        <dbReference type="Rhea" id="RHEA-COMP:9562"/>
        <dbReference type="ChEBI" id="CHEBI:15378"/>
        <dbReference type="ChEBI" id="CHEBI:17757"/>
        <dbReference type="ChEBI" id="CHEBI:57783"/>
        <dbReference type="ChEBI" id="CHEBI:58349"/>
        <dbReference type="ChEBI" id="CHEBI:62192"/>
    </reaction>
</comment>
<comment type="cofactor">
    <cofactor evidence="1">
        <name>[4Fe-4S] cluster</name>
        <dbReference type="ChEBI" id="CHEBI:49883"/>
    </cofactor>
    <text evidence="1">Binds 2 [4Fe-4S] clusters per subunit.</text>
</comment>
<comment type="subunit">
    <text evidence="1">NDH is composed of at least 16 different subunits, 5 of which are encoded in the nucleus.</text>
</comment>
<comment type="subcellular location">
    <subcellularLocation>
        <location evidence="1">Plastid</location>
        <location evidence="1">Chloroplast thylakoid membrane</location>
        <topology evidence="1">Peripheral membrane protein</topology>
    </subcellularLocation>
</comment>
<comment type="similarity">
    <text evidence="1">Belongs to the complex I 23 kDa subunit family.</text>
</comment>